<protein>
    <recommendedName>
        <fullName evidence="1">Glucokinase</fullName>
        <ecNumber evidence="1">2.7.1.2</ecNumber>
    </recommendedName>
    <alternativeName>
        <fullName evidence="1">Glucose kinase</fullName>
    </alternativeName>
</protein>
<proteinExistence type="inferred from homology"/>
<evidence type="ECO:0000255" key="1">
    <source>
        <dbReference type="HAMAP-Rule" id="MF_00524"/>
    </source>
</evidence>
<keyword id="KW-0067">ATP-binding</keyword>
<keyword id="KW-0963">Cytoplasm</keyword>
<keyword id="KW-0324">Glycolysis</keyword>
<keyword id="KW-0418">Kinase</keyword>
<keyword id="KW-0547">Nucleotide-binding</keyword>
<keyword id="KW-1185">Reference proteome</keyword>
<keyword id="KW-0808">Transferase</keyword>
<organism>
    <name type="scientific">Psychromonas ingrahamii (strain DSM 17664 / CCUG 51855 / 37)</name>
    <dbReference type="NCBI Taxonomy" id="357804"/>
    <lineage>
        <taxon>Bacteria</taxon>
        <taxon>Pseudomonadati</taxon>
        <taxon>Pseudomonadota</taxon>
        <taxon>Gammaproteobacteria</taxon>
        <taxon>Alteromonadales</taxon>
        <taxon>Psychromonadaceae</taxon>
        <taxon>Psychromonas</taxon>
    </lineage>
</organism>
<gene>
    <name evidence="1" type="primary">glk</name>
    <name type="ordered locus">Ping_2382</name>
</gene>
<name>GLK_PSYIN</name>
<reference key="1">
    <citation type="journal article" date="2008" name="BMC Genomics">
        <title>Genomics of an extreme psychrophile, Psychromonas ingrahamii.</title>
        <authorList>
            <person name="Riley M."/>
            <person name="Staley J.T."/>
            <person name="Danchin A."/>
            <person name="Wang T.Z."/>
            <person name="Brettin T.S."/>
            <person name="Hauser L.J."/>
            <person name="Land M.L."/>
            <person name="Thompson L.S."/>
        </authorList>
    </citation>
    <scope>NUCLEOTIDE SEQUENCE [LARGE SCALE GENOMIC DNA]</scope>
    <source>
        <strain>DSM 17664 / CCUG 51855 / 37</strain>
    </source>
</reference>
<dbReference type="EC" id="2.7.1.2" evidence="1"/>
<dbReference type="EMBL" id="CP000510">
    <property type="protein sequence ID" value="ABM04119.1"/>
    <property type="molecule type" value="Genomic_DNA"/>
</dbReference>
<dbReference type="RefSeq" id="WP_011770679.1">
    <property type="nucleotide sequence ID" value="NC_008709.1"/>
</dbReference>
<dbReference type="SMR" id="A1SXA4"/>
<dbReference type="STRING" id="357804.Ping_2382"/>
<dbReference type="KEGG" id="pin:Ping_2382"/>
<dbReference type="eggNOG" id="COG0837">
    <property type="taxonomic scope" value="Bacteria"/>
</dbReference>
<dbReference type="HOGENOM" id="CLU_042582_1_0_6"/>
<dbReference type="OrthoDB" id="9800595at2"/>
<dbReference type="Proteomes" id="UP000000639">
    <property type="component" value="Chromosome"/>
</dbReference>
<dbReference type="GO" id="GO:0005829">
    <property type="term" value="C:cytosol"/>
    <property type="evidence" value="ECO:0007669"/>
    <property type="project" value="TreeGrafter"/>
</dbReference>
<dbReference type="GO" id="GO:0005524">
    <property type="term" value="F:ATP binding"/>
    <property type="evidence" value="ECO:0007669"/>
    <property type="project" value="UniProtKB-UniRule"/>
</dbReference>
<dbReference type="GO" id="GO:0005536">
    <property type="term" value="F:D-glucose binding"/>
    <property type="evidence" value="ECO:0007669"/>
    <property type="project" value="InterPro"/>
</dbReference>
<dbReference type="GO" id="GO:0004340">
    <property type="term" value="F:glucokinase activity"/>
    <property type="evidence" value="ECO:0007669"/>
    <property type="project" value="UniProtKB-UniRule"/>
</dbReference>
<dbReference type="GO" id="GO:0006096">
    <property type="term" value="P:glycolytic process"/>
    <property type="evidence" value="ECO:0007669"/>
    <property type="project" value="UniProtKB-UniRule"/>
</dbReference>
<dbReference type="CDD" id="cd24008">
    <property type="entry name" value="ASKHA_NBD_GLK"/>
    <property type="match status" value="1"/>
</dbReference>
<dbReference type="FunFam" id="3.40.367.20:FF:000002">
    <property type="entry name" value="Glucokinase"/>
    <property type="match status" value="1"/>
</dbReference>
<dbReference type="Gene3D" id="3.30.420.40">
    <property type="match status" value="1"/>
</dbReference>
<dbReference type="Gene3D" id="3.40.367.20">
    <property type="match status" value="1"/>
</dbReference>
<dbReference type="HAMAP" id="MF_00524">
    <property type="entry name" value="Glucokinase"/>
    <property type="match status" value="1"/>
</dbReference>
<dbReference type="InterPro" id="IPR043129">
    <property type="entry name" value="ATPase_NBD"/>
</dbReference>
<dbReference type="InterPro" id="IPR050201">
    <property type="entry name" value="Bacterial_glucokinase"/>
</dbReference>
<dbReference type="InterPro" id="IPR003836">
    <property type="entry name" value="Glucokinase"/>
</dbReference>
<dbReference type="NCBIfam" id="TIGR00749">
    <property type="entry name" value="glk"/>
    <property type="match status" value="1"/>
</dbReference>
<dbReference type="NCBIfam" id="NF001414">
    <property type="entry name" value="PRK00292.1-1"/>
    <property type="match status" value="1"/>
</dbReference>
<dbReference type="NCBIfam" id="NF001416">
    <property type="entry name" value="PRK00292.1-3"/>
    <property type="match status" value="1"/>
</dbReference>
<dbReference type="NCBIfam" id="NF009073">
    <property type="entry name" value="PRK12408.1"/>
    <property type="match status" value="1"/>
</dbReference>
<dbReference type="PANTHER" id="PTHR47690">
    <property type="entry name" value="GLUCOKINASE"/>
    <property type="match status" value="1"/>
</dbReference>
<dbReference type="PANTHER" id="PTHR47690:SF1">
    <property type="entry name" value="GLUCOKINASE"/>
    <property type="match status" value="1"/>
</dbReference>
<dbReference type="Pfam" id="PF02685">
    <property type="entry name" value="Glucokinase"/>
    <property type="match status" value="1"/>
</dbReference>
<dbReference type="SUPFAM" id="SSF53067">
    <property type="entry name" value="Actin-like ATPase domain"/>
    <property type="match status" value="1"/>
</dbReference>
<sequence>MKQVSLVGDVGGTNARLALCDLETGSISHSLTYSGLDYPSLEAVVRVYLDQQSLRIEQACIGIACPIDGDQVSMTNHSWAFSIKQMQENLGLKKLTIINDFTAVSMAIPVLGADDKVQLGGGLARSGKPIAVYGAGTGLGVAHLVQSCDRWLSLPGEGGHVDMASCTEQEDALIQQLRLELGHVSAERLLSGPGLVNIYKGLVTSDHRVPEILTPKQISDRALSGECHDCHRALSLFCVLMGRFAGNLALNLGTFGGVYIAGGLVPRFLEFFKASGFREAFADKGRFKEHLEAIPVYVITHSQPGLLGAGAYLRQSLGITL</sequence>
<comment type="catalytic activity">
    <reaction evidence="1">
        <text>D-glucose + ATP = D-glucose 6-phosphate + ADP + H(+)</text>
        <dbReference type="Rhea" id="RHEA:17825"/>
        <dbReference type="ChEBI" id="CHEBI:4167"/>
        <dbReference type="ChEBI" id="CHEBI:15378"/>
        <dbReference type="ChEBI" id="CHEBI:30616"/>
        <dbReference type="ChEBI" id="CHEBI:61548"/>
        <dbReference type="ChEBI" id="CHEBI:456216"/>
        <dbReference type="EC" id="2.7.1.2"/>
    </reaction>
</comment>
<comment type="subcellular location">
    <subcellularLocation>
        <location evidence="1">Cytoplasm</location>
    </subcellularLocation>
</comment>
<comment type="similarity">
    <text evidence="1">Belongs to the bacterial glucokinase family.</text>
</comment>
<feature type="chain" id="PRO_1000050975" description="Glucokinase">
    <location>
        <begin position="1"/>
        <end position="321"/>
    </location>
</feature>
<feature type="binding site" evidence="1">
    <location>
        <begin position="8"/>
        <end position="13"/>
    </location>
    <ligand>
        <name>ATP</name>
        <dbReference type="ChEBI" id="CHEBI:30616"/>
    </ligand>
</feature>
<accession>A1SXA4</accession>